<dbReference type="EC" id="5.5.1.-" evidence="4"/>
<dbReference type="EMBL" id="MK801691">
    <property type="protein sequence ID" value="QCS37516.1"/>
    <property type="molecule type" value="Genomic_DNA"/>
</dbReference>
<dbReference type="SMR" id="A0A4P8W796"/>
<dbReference type="GlyCosmos" id="A0A4P8W796">
    <property type="glycosylation" value="3 sites, No reported glycans"/>
</dbReference>
<dbReference type="OrthoDB" id="5344254at2759"/>
<dbReference type="Proteomes" id="UP000515153">
    <property type="component" value="Unplaced"/>
</dbReference>
<dbReference type="GO" id="GO:0016853">
    <property type="term" value="F:isomerase activity"/>
    <property type="evidence" value="ECO:0007669"/>
    <property type="project" value="UniProtKB-KW"/>
</dbReference>
<dbReference type="InterPro" id="IPR054499">
    <property type="entry name" value="DA_C"/>
</dbReference>
<dbReference type="Pfam" id="PF22903">
    <property type="entry name" value="DA_C"/>
    <property type="match status" value="1"/>
</dbReference>
<dbReference type="Pfam" id="PF24137">
    <property type="entry name" value="DA_N"/>
    <property type="match status" value="1"/>
</dbReference>
<dbReference type="SUPFAM" id="SSF159245">
    <property type="entry name" value="AttH-like"/>
    <property type="match status" value="1"/>
</dbReference>
<reference key="1">
    <citation type="journal article" date="2019" name="Org. Lett.">
        <title>Targeted gene inactivations expose silent cytochalasans in Magnaporthe grisea NI980.</title>
        <authorList>
            <person name="Wang C."/>
            <person name="Hantke V."/>
            <person name="Cox R.J."/>
            <person name="Skellam E."/>
        </authorList>
    </citation>
    <scope>NUCLEOTIDE SEQUENCE [GENOMIC DNA]</scope>
    <scope>FUNCTION</scope>
    <scope>PATHWAY</scope>
    <source>
        <strain>NI980</strain>
    </source>
</reference>
<reference key="2">
    <citation type="journal article" date="2019" name="Org. Lett.">
        <title>Investigating the function of cryptic cytochalasan cytochrome P450 monooxygenases using combinatorial biosynthesis.</title>
        <authorList>
            <person name="Wang C."/>
            <person name="Becker K."/>
            <person name="Pfuetze S."/>
            <person name="Kuhnert E."/>
            <person name="Stadler M."/>
            <person name="Cox R.J."/>
            <person name="Skellam E."/>
        </authorList>
    </citation>
    <scope>FUNCTION</scope>
</reference>
<reference key="3">
    <citation type="journal article" date="2020" name="Chem. Commun. (Camb.)">
        <title>Evidence for enzyme catalysed intramolecular [4+2] Diels-Alder cyclization during the biosynthesis of pyrichalasin H.</title>
        <authorList>
            <person name="Hantke V."/>
            <person name="Skellam E.J."/>
            <person name="Cox R.J."/>
        </authorList>
    </citation>
    <scope>FUNCTION</scope>
    <scope>CATALYTIC ACTIVITY</scope>
    <scope>DISRUPTION PHENOTYPE</scope>
</reference>
<sequence>MLPSFIFVYSLLATATATSPDWPEPWPSHWREPGSDLFPNQQVHLAVEEAGTGSGCRISNITSNEMAKGRTIVDFPLYAVGSLEEPKLQPLNSSGGEQWEFDGVSEDGMQSFIFGFYRDPNYAILGTGNLRVSIEFGFEDRTRFSEVYYAQRSVVETCSLGTRGLWVDKEAGWKFSFLVDAAMQEAIITLDSDTVKGRIIITSRAKPLAADGSTWPAENASTVTIPYYYWSQPIPAGTVETNVEIKGKLIKWKGMGGHERFWSSFSWFTCMRSLQAVRAMLGPYVLSYFSFTSNLIPDLTHQSVVLFHDGAVVFRSTLGTPSETEDYATVTKTYGGATTGTLKDKVTGFQLELVSPSKMRHYTFFVEHLNVGFEYILGEGVGGSGFSSQSRGGHVGLDQHEGVALTEALTFPKNSPLFRSNYV</sequence>
<feature type="signal peptide" evidence="1">
    <location>
        <begin position="1"/>
        <end position="17"/>
    </location>
</feature>
<feature type="chain" id="PRO_5020856806" description="Diels-Alderase pyiF">
    <location>
        <begin position="18"/>
        <end position="423"/>
    </location>
</feature>
<feature type="glycosylation site" description="N-linked (GlcNAc...) asparagine" evidence="2">
    <location>
        <position position="60"/>
    </location>
</feature>
<feature type="glycosylation site" description="N-linked (GlcNAc...) asparagine" evidence="2">
    <location>
        <position position="92"/>
    </location>
</feature>
<feature type="glycosylation site" description="N-linked (GlcNAc...) asparagine" evidence="2">
    <location>
        <position position="219"/>
    </location>
</feature>
<comment type="function">
    <text evidence="3 4 7">Diels-Alderase; part of the gene cluster that mediates the biosynthesis of the mycotoxin pyrichalasin H, a tyrosine-derived cytochalasan that inhibits the growth of rice seedlings, but also inhibits lymphocyte capping and actin polymerization and alters cell morphology (Probable) (PubMed:31099577). Pyrichalasin H is indicated as the responsible agent for the genus-specific pathogenicity of M.grisea toward crabgrass (PubMed:31099577). The first step in the pathway is catalyzed by the O-methyltransferase pyiA which methylates free tyrosine to generate the precursor O-methyltyrosine (PubMed:31099577). The hybrid PKS-NRPS pyiS, assisted by the enoyl reductase pyiC, are responsible for fusion of the O-methyltyrosine precursor and the polyketide backbone (PubMed:31099577). The polyketide synthase module (PKS) of pyiS is responsible for the synthesis of the polyketide backbone and the downstream nonribosomal peptide synthetase (NRPS) amidates the carboxyl end of the polyketide with the O-methyltyrosine precursor (PubMed:31099577). As the NRPS A-domain demonstrates substrate tolerance, pyiS can also use phenylalanine, tyrosine and even para-chlorophenylalanine as amino acid precursor, which leads to the production of novel cytochalasans, including halogenated cytochalasans (PubMed:31099577). Because pyiS lacks a designated enoylreductase (ER) domain, the required activity is provided the enoyl reductase pyiC (PubMed:31099577). Reduction by the hydrolyase pyiE leads to 1,5-dihydropyrrolone, which is substrate for dehydration and intra-molecular Diels-Alder cyclization by the Diels-Alderase pyiF to yield the required isoindolone-fused macrocycle (PubMed:32039410). The tailoring cytochrome P450 monooxygenases piyD and piyG catalyze the hydroxylation at C-18 and C-7, respectivily, whereas the short-chain dehydrogenase/reductase pyiH reduces the carbonyl at C-21 in preparation for the transfer of an acetyl group by the acetyltransferase pyiB (PubMed:31099577). These 3 reactions whose order is not clear yet, lead to the production of O-methylpyrichalasin J, a deacetylated pyrichalasin H. Finally, pyiB to converts O-methylpyrichalasin J into the final product pyrichalasin H via acetylation of C-21 (PubMed:31099577).</text>
</comment>
<comment type="pathway">
    <text evidence="4">Mycotoxin biosynthesis.</text>
</comment>
<comment type="disruption phenotype">
    <text evidence="4">Abolishes the production of pyrichalasin H, and leads to the accumulation of sereval compounds that appear to arise from a redox shunt pathway from 1,5-dihydropyrrolone.</text>
</comment>
<comment type="similarity">
    <text evidence="6">Belongs to the Diels-Alderase family.</text>
</comment>
<gene>
    <name evidence="5" type="primary">pyiF</name>
</gene>
<accession>A0A4P8W796</accession>
<organism>
    <name type="scientific">Pyricularia grisea</name>
    <name type="common">Crabgrass-specific blast fungus</name>
    <name type="synonym">Magnaporthe grisea</name>
    <dbReference type="NCBI Taxonomy" id="148305"/>
    <lineage>
        <taxon>Eukaryota</taxon>
        <taxon>Fungi</taxon>
        <taxon>Dikarya</taxon>
        <taxon>Ascomycota</taxon>
        <taxon>Pezizomycotina</taxon>
        <taxon>Sordariomycetes</taxon>
        <taxon>Sordariomycetidae</taxon>
        <taxon>Magnaporthales</taxon>
        <taxon>Pyriculariaceae</taxon>
        <taxon>Pyricularia</taxon>
    </lineage>
</organism>
<keyword id="KW-0325">Glycoprotein</keyword>
<keyword id="KW-0413">Isomerase</keyword>
<keyword id="KW-1185">Reference proteome</keyword>
<keyword id="KW-0732">Signal</keyword>
<evidence type="ECO:0000255" key="1"/>
<evidence type="ECO:0000255" key="2">
    <source>
        <dbReference type="PROSITE-ProRule" id="PRU00498"/>
    </source>
</evidence>
<evidence type="ECO:0000269" key="3">
    <source>
    </source>
</evidence>
<evidence type="ECO:0000269" key="4">
    <source>
    </source>
</evidence>
<evidence type="ECO:0000303" key="5">
    <source>
    </source>
</evidence>
<evidence type="ECO:0000305" key="6"/>
<evidence type="ECO:0000305" key="7">
    <source>
    </source>
</evidence>
<name>PYIF_PYRGI</name>
<proteinExistence type="evidence at protein level"/>
<protein>
    <recommendedName>
        <fullName evidence="5">Diels-Alderase pyiF</fullName>
        <ecNumber evidence="4">5.5.1.-</ecNumber>
    </recommendedName>
    <alternativeName>
        <fullName evidence="5">Pyrichalasin H biosynthesis cluster protein F</fullName>
    </alternativeName>
</protein>